<dbReference type="EC" id="4.2.1.109" evidence="1"/>
<dbReference type="EC" id="3.1.3.77" evidence="1"/>
<dbReference type="EMBL" id="GL002613">
    <property type="protein sequence ID" value="EES20373.1"/>
    <property type="molecule type" value="Genomic_DNA"/>
</dbReference>
<dbReference type="RefSeq" id="XP_002489129.1">
    <property type="nucleotide sequence ID" value="XM_002489084.1"/>
</dbReference>
<dbReference type="SMR" id="C6JS30"/>
<dbReference type="EnsemblPlants" id="OQU83400">
    <property type="protein sequence ID" value="OQU83400"/>
    <property type="gene ID" value="SORBI_3005G110541"/>
</dbReference>
<dbReference type="Gramene" id="OQU83400">
    <property type="protein sequence ID" value="OQU83400"/>
    <property type="gene ID" value="SORBI_3005G110541"/>
</dbReference>
<dbReference type="KEGG" id="sbi:8155324"/>
<dbReference type="eggNOG" id="KOG2630">
    <property type="taxonomic scope" value="Eukaryota"/>
</dbReference>
<dbReference type="eggNOG" id="KOG2631">
    <property type="taxonomic scope" value="Eukaryota"/>
</dbReference>
<dbReference type="HOGENOM" id="CLU_023273_3_1_1"/>
<dbReference type="OMA" id="IPNGCHA"/>
<dbReference type="OrthoDB" id="191080at2759"/>
<dbReference type="UniPathway" id="UPA00904">
    <property type="reaction ID" value="UER00875"/>
</dbReference>
<dbReference type="UniPathway" id="UPA00904">
    <property type="reaction ID" value="UER00876"/>
</dbReference>
<dbReference type="UniPathway" id="UPA00904">
    <property type="reaction ID" value="UER00877"/>
</dbReference>
<dbReference type="ExpressionAtlas" id="C6JS30">
    <property type="expression patterns" value="baseline and differential"/>
</dbReference>
<dbReference type="GO" id="GO:0005737">
    <property type="term" value="C:cytoplasm"/>
    <property type="evidence" value="ECO:0007669"/>
    <property type="project" value="InterPro"/>
</dbReference>
<dbReference type="GO" id="GO:0043874">
    <property type="term" value="F:acireductone synthase activity"/>
    <property type="evidence" value="ECO:0007669"/>
    <property type="project" value="UniProtKB-EC"/>
</dbReference>
<dbReference type="GO" id="GO:0000287">
    <property type="term" value="F:magnesium ion binding"/>
    <property type="evidence" value="ECO:0007669"/>
    <property type="project" value="UniProtKB-UniRule"/>
</dbReference>
<dbReference type="GO" id="GO:0046570">
    <property type="term" value="F:methylthioribulose 1-phosphate dehydratase activity"/>
    <property type="evidence" value="ECO:0007669"/>
    <property type="project" value="UniProtKB-UniRule"/>
</dbReference>
<dbReference type="GO" id="GO:0008270">
    <property type="term" value="F:zinc ion binding"/>
    <property type="evidence" value="ECO:0007669"/>
    <property type="project" value="UniProtKB-UniRule"/>
</dbReference>
<dbReference type="GO" id="GO:0019509">
    <property type="term" value="P:L-methionine salvage from methylthioadenosine"/>
    <property type="evidence" value="ECO:0007669"/>
    <property type="project" value="UniProtKB-UniRule"/>
</dbReference>
<dbReference type="CDD" id="cd01629">
    <property type="entry name" value="HAD_EP"/>
    <property type="match status" value="1"/>
</dbReference>
<dbReference type="FunFam" id="1.10.720.60:FF:000001">
    <property type="entry name" value="Probable bifunctional methylthioribulose-1-phosphate dehydratase/enolase-phosphatase E1"/>
    <property type="match status" value="1"/>
</dbReference>
<dbReference type="FunFam" id="3.40.225.10:FF:000010">
    <property type="entry name" value="Probable bifunctional methylthioribulose-1-phosphate dehydratase/enolase-phosphatase E1"/>
    <property type="match status" value="1"/>
</dbReference>
<dbReference type="FunFam" id="3.40.50.1000:FF:000088">
    <property type="entry name" value="Probable bifunctional methylthioribulose-1-phosphate dehydratase/enolase-phosphatase E1"/>
    <property type="match status" value="1"/>
</dbReference>
<dbReference type="Gene3D" id="1.10.720.60">
    <property type="match status" value="1"/>
</dbReference>
<dbReference type="Gene3D" id="3.40.225.10">
    <property type="entry name" value="Class II aldolase/adducin N-terminal domain"/>
    <property type="match status" value="1"/>
</dbReference>
<dbReference type="Gene3D" id="3.40.50.1000">
    <property type="entry name" value="HAD superfamily/HAD-like"/>
    <property type="match status" value="1"/>
</dbReference>
<dbReference type="HAMAP" id="MF_03116">
    <property type="entry name" value="Salvage_MtnB_euk"/>
    <property type="match status" value="1"/>
</dbReference>
<dbReference type="HAMAP" id="MF_03118">
    <property type="entry name" value="Salvage_MtnBC"/>
    <property type="match status" value="1"/>
</dbReference>
<dbReference type="InterPro" id="IPR001303">
    <property type="entry name" value="Aldolase_II/adducin_N"/>
</dbReference>
<dbReference type="InterPro" id="IPR036409">
    <property type="entry name" value="Aldolase_II/adducin_N_sf"/>
</dbReference>
<dbReference type="InterPro" id="IPR023943">
    <property type="entry name" value="Enolase-ppase_E1"/>
</dbReference>
<dbReference type="InterPro" id="IPR036412">
    <property type="entry name" value="HAD-like_sf"/>
</dbReference>
<dbReference type="InterPro" id="IPR023214">
    <property type="entry name" value="HAD_sf"/>
</dbReference>
<dbReference type="InterPro" id="IPR017714">
    <property type="entry name" value="MethylthioRu-1-P_deHdtase_MtnB"/>
</dbReference>
<dbReference type="InterPro" id="IPR027505">
    <property type="entry name" value="MtnB_viridiplantae"/>
</dbReference>
<dbReference type="InterPro" id="IPR027514">
    <property type="entry name" value="Salvage_MtnB_euk"/>
</dbReference>
<dbReference type="NCBIfam" id="TIGR01691">
    <property type="entry name" value="enolase-ppase"/>
    <property type="match status" value="1"/>
</dbReference>
<dbReference type="NCBIfam" id="TIGR03328">
    <property type="entry name" value="salvage_mtnB"/>
    <property type="match status" value="1"/>
</dbReference>
<dbReference type="PANTHER" id="PTHR20371">
    <property type="entry name" value="ENOLASE-PHOSPHATASE E1"/>
    <property type="match status" value="1"/>
</dbReference>
<dbReference type="PANTHER" id="PTHR20371:SF1">
    <property type="entry name" value="ENOLASE-PHOSPHATASE E1"/>
    <property type="match status" value="1"/>
</dbReference>
<dbReference type="Pfam" id="PF00596">
    <property type="entry name" value="Aldolase_II"/>
    <property type="match status" value="1"/>
</dbReference>
<dbReference type="Pfam" id="PF00702">
    <property type="entry name" value="Hydrolase"/>
    <property type="match status" value="1"/>
</dbReference>
<dbReference type="SFLD" id="SFLDG01129">
    <property type="entry name" value="C1.5:_HAD__Beta-PGM__Phosphata"/>
    <property type="match status" value="1"/>
</dbReference>
<dbReference type="SFLD" id="SFLDF00044">
    <property type="entry name" value="enolase-phosphatase"/>
    <property type="match status" value="1"/>
</dbReference>
<dbReference type="SMART" id="SM01007">
    <property type="entry name" value="Aldolase_II"/>
    <property type="match status" value="1"/>
</dbReference>
<dbReference type="SUPFAM" id="SSF53639">
    <property type="entry name" value="AraD/HMP-PK domain-like"/>
    <property type="match status" value="1"/>
</dbReference>
<dbReference type="SUPFAM" id="SSF56784">
    <property type="entry name" value="HAD-like"/>
    <property type="match status" value="1"/>
</dbReference>
<comment type="catalytic activity">
    <reaction evidence="1">
        <text>5-(methylsulfanyl)-D-ribulose 1-phosphate = 5-methylsulfanyl-2,3-dioxopentyl phosphate + H2O</text>
        <dbReference type="Rhea" id="RHEA:15549"/>
        <dbReference type="ChEBI" id="CHEBI:15377"/>
        <dbReference type="ChEBI" id="CHEBI:58548"/>
        <dbReference type="ChEBI" id="CHEBI:58828"/>
        <dbReference type="EC" id="4.2.1.109"/>
    </reaction>
</comment>
<comment type="catalytic activity">
    <reaction evidence="1">
        <text>5-methylsulfanyl-2,3-dioxopentyl phosphate + H2O = 1,2-dihydroxy-5-(methylsulfanyl)pent-1-en-3-one + phosphate</text>
        <dbReference type="Rhea" id="RHEA:21700"/>
        <dbReference type="ChEBI" id="CHEBI:15377"/>
        <dbReference type="ChEBI" id="CHEBI:43474"/>
        <dbReference type="ChEBI" id="CHEBI:49252"/>
        <dbReference type="ChEBI" id="CHEBI:58828"/>
        <dbReference type="EC" id="3.1.3.77"/>
    </reaction>
</comment>
<comment type="cofactor">
    <cofactor evidence="1">
        <name>Zn(2+)</name>
        <dbReference type="ChEBI" id="CHEBI:29105"/>
    </cofactor>
    <text evidence="1">Binds 1 zinc ion per subunit.</text>
</comment>
<comment type="cofactor">
    <cofactor evidence="1">
        <name>Mg(2+)</name>
        <dbReference type="ChEBI" id="CHEBI:18420"/>
    </cofactor>
    <text evidence="1">Binds 1 Mg(2+) ion per subunit.</text>
</comment>
<comment type="pathway">
    <text evidence="1">Amino-acid biosynthesis; L-methionine biosynthesis via salvage pathway; L-methionine from S-methyl-5-thio-alpha-D-ribose 1-phosphate: step 2/6.</text>
</comment>
<comment type="pathway">
    <text evidence="1">Amino-acid biosynthesis; L-methionine biosynthesis via salvage pathway; L-methionine from S-methyl-5-thio-alpha-D-ribose 1-phosphate: step 3/6.</text>
</comment>
<comment type="pathway">
    <text evidence="1">Amino-acid biosynthesis; L-methionine biosynthesis via salvage pathway; L-methionine from S-methyl-5-thio-alpha-D-ribose 1-phosphate: step 4/6.</text>
</comment>
<comment type="similarity">
    <text evidence="1">In the N-terminal section; belongs to the aldolase class II family. MtnB subfamily.</text>
</comment>
<comment type="similarity">
    <text evidence="1">In the C-terminal section; belongs to the HAD-like hydrolase superfamily. MasA/MtnC family.</text>
</comment>
<organism>
    <name type="scientific">Sorghum bicolor</name>
    <name type="common">Sorghum</name>
    <name type="synonym">Sorghum vulgare</name>
    <dbReference type="NCBI Taxonomy" id="4558"/>
    <lineage>
        <taxon>Eukaryota</taxon>
        <taxon>Viridiplantae</taxon>
        <taxon>Streptophyta</taxon>
        <taxon>Embryophyta</taxon>
        <taxon>Tracheophyta</taxon>
        <taxon>Spermatophyta</taxon>
        <taxon>Magnoliopsida</taxon>
        <taxon>Liliopsida</taxon>
        <taxon>Poales</taxon>
        <taxon>Poaceae</taxon>
        <taxon>PACMAD clade</taxon>
        <taxon>Panicoideae</taxon>
        <taxon>Andropogonodae</taxon>
        <taxon>Andropogoneae</taxon>
        <taxon>Sorghinae</taxon>
        <taxon>Sorghum</taxon>
    </lineage>
</organism>
<reference key="1">
    <citation type="journal article" date="2009" name="Nature">
        <title>The Sorghum bicolor genome and the diversification of grasses.</title>
        <authorList>
            <person name="Paterson A.H."/>
            <person name="Bowers J.E."/>
            <person name="Bruggmann R."/>
            <person name="Dubchak I."/>
            <person name="Grimwood J."/>
            <person name="Gundlach H."/>
            <person name="Haberer G."/>
            <person name="Hellsten U."/>
            <person name="Mitros T."/>
            <person name="Poliakov A."/>
            <person name="Schmutz J."/>
            <person name="Spannagl M."/>
            <person name="Tang H."/>
            <person name="Wang X."/>
            <person name="Wicker T."/>
            <person name="Bharti A.K."/>
            <person name="Chapman J."/>
            <person name="Feltus F.A."/>
            <person name="Gowik U."/>
            <person name="Grigoriev I.V."/>
            <person name="Lyons E."/>
            <person name="Maher C.A."/>
            <person name="Martis M."/>
            <person name="Narechania A."/>
            <person name="Otillar R.P."/>
            <person name="Penning B.W."/>
            <person name="Salamov A.A."/>
            <person name="Wang Y."/>
            <person name="Zhang L."/>
            <person name="Carpita N.C."/>
            <person name="Freeling M."/>
            <person name="Gingle A.R."/>
            <person name="Hash C.T."/>
            <person name="Keller B."/>
            <person name="Klein P."/>
            <person name="Kresovich S."/>
            <person name="McCann M.C."/>
            <person name="Ming R."/>
            <person name="Peterson D.G."/>
            <person name="Mehboob-ur-Rahman M."/>
            <person name="Ware D."/>
            <person name="Westhoff P."/>
            <person name="Mayer K.F.X."/>
            <person name="Messing J."/>
            <person name="Rokhsar D.S."/>
        </authorList>
    </citation>
    <scope>NUCLEOTIDE SEQUENCE [LARGE SCALE GENOMIC DNA]</scope>
    <source>
        <strain>cv. BTx623</strain>
    </source>
</reference>
<sequence length="517" mass="57005">MACGGCSCEAAVGATASEAYLEGEPVREARELVAELCRHFYAQGWVTGTGGSITVKVNDPAVPLADRLIVMSPSGVQKERMVAEDMYVMAADGKVLSAPVAKPWPNKPPKCTDCAPLFMKAYLMRGAGAVIHSHGMETCIATMLNPGAKEFRMTHMEMIKGIKGHGYRDELVIPIVENTPYEYELTDSLSEAIAAYPKATAVLVRNHGIYVWGDSWINAKTQAECYHYLLDACIKLYQLGIDWTTPEHGPINNAKRQRSILSSEIPNGCRAADSSKCVVLDIEGTTTPISFVTDVMFPYARDNVREHLTSTFDSEETKDDIKLLRIQIEDDLRNGISGAVPVPPDEAGKEEVINSLVANVESMIKADRKITPLKQLQGHIWRTGFEKKELQGVVFEDVPVALKNWHSSGIKVYIYSSGSREAQRLLFGNTTYGDLRKFLCGYFDTTTGNKRETRSYFEVSQSLGVDSPSQILFITDVFQEAVAAKNTGFEVIISIRPGNAPLPDNHGFRTIKSFSEI</sequence>
<keyword id="KW-0028">Amino-acid biosynthesis</keyword>
<keyword id="KW-0378">Hydrolase</keyword>
<keyword id="KW-0456">Lyase</keyword>
<keyword id="KW-0460">Magnesium</keyword>
<keyword id="KW-0479">Metal-binding</keyword>
<keyword id="KW-0486">Methionine biosynthesis</keyword>
<keyword id="KW-0511">Multifunctional enzyme</keyword>
<keyword id="KW-0862">Zinc</keyword>
<feature type="chain" id="PRO_0000394162" description="Probable bifunctional methylthioribulose-1-phosphate dehydratase/enolase-phosphatase E1">
    <location>
        <begin position="1"/>
        <end position="517"/>
    </location>
</feature>
<feature type="region of interest" description="Methylthioribulose-1-phosphate dehydratase" evidence="1">
    <location>
        <begin position="1"/>
        <end position="242"/>
    </location>
</feature>
<feature type="region of interest" description="Enolase-phosphatase E1" evidence="1">
    <location>
        <begin position="278"/>
        <end position="517"/>
    </location>
</feature>
<feature type="active site" description="Proton donor/acceptor; for methylthioribulose-1-phosphate dehydratase activity" evidence="1">
    <location>
        <position position="157"/>
    </location>
</feature>
<feature type="binding site" evidence="1">
    <location>
        <position position="114"/>
    </location>
    <ligand>
        <name>substrate</name>
        <label>1</label>
        <note>for methylthioribulose-1-phosphate dehydratase activity</note>
    </ligand>
</feature>
<feature type="binding site" evidence="1">
    <location>
        <position position="132"/>
    </location>
    <ligand>
        <name>Zn(2+)</name>
        <dbReference type="ChEBI" id="CHEBI:29105"/>
    </ligand>
</feature>
<feature type="binding site" evidence="1">
    <location>
        <position position="134"/>
    </location>
    <ligand>
        <name>Zn(2+)</name>
        <dbReference type="ChEBI" id="CHEBI:29105"/>
    </ligand>
</feature>
<feature type="binding site" evidence="1">
    <location>
        <position position="207"/>
    </location>
    <ligand>
        <name>Zn(2+)</name>
        <dbReference type="ChEBI" id="CHEBI:29105"/>
    </ligand>
</feature>
<feature type="binding site" evidence="1">
    <location>
        <position position="281"/>
    </location>
    <ligand>
        <name>Mg(2+)</name>
        <dbReference type="ChEBI" id="CHEBI:18420"/>
    </ligand>
</feature>
<feature type="binding site" evidence="1">
    <location>
        <position position="283"/>
    </location>
    <ligand>
        <name>Mg(2+)</name>
        <dbReference type="ChEBI" id="CHEBI:18420"/>
    </ligand>
</feature>
<feature type="binding site" evidence="1">
    <location>
        <begin position="416"/>
        <end position="417"/>
    </location>
    <ligand>
        <name>substrate</name>
        <label>2</label>
        <note>for enolase-phosphatase activity</note>
    </ligand>
</feature>
<feature type="binding site" evidence="1">
    <location>
        <position position="450"/>
    </location>
    <ligand>
        <name>substrate</name>
        <label>2</label>
        <note>for enolase-phosphatase activity</note>
    </ligand>
</feature>
<feature type="binding site" evidence="1">
    <location>
        <position position="476"/>
    </location>
    <ligand>
        <name>Mg(2+)</name>
        <dbReference type="ChEBI" id="CHEBI:18420"/>
    </ligand>
</feature>
<protein>
    <recommendedName>
        <fullName evidence="1">Probable bifunctional methylthioribulose-1-phosphate dehydratase/enolase-phosphatase E1</fullName>
    </recommendedName>
    <domain>
        <recommendedName>
            <fullName evidence="1">Methylthioribulose-1-phosphate dehydratase</fullName>
            <shortName evidence="1">MTRu-1-P dehydratase</shortName>
            <ecNumber evidence="1">4.2.1.109</ecNumber>
        </recommendedName>
    </domain>
    <domain>
        <recommendedName>
            <fullName evidence="1">Enolase-phosphatase E1</fullName>
            <ecNumber evidence="1">3.1.3.77</ecNumber>
        </recommendedName>
        <alternativeName>
            <fullName evidence="1">2,3-diketo-5-methylthio-1-phosphopentane phosphatase</fullName>
        </alternativeName>
    </domain>
</protein>
<accession>C6JS30</accession>
<gene>
    <name type="ORF">SORBIDRAFT_0019s002010</name>
</gene>
<name>MTBC_SORBI</name>
<proteinExistence type="inferred from homology"/>
<evidence type="ECO:0000255" key="1">
    <source>
        <dbReference type="HAMAP-Rule" id="MF_03118"/>
    </source>
</evidence>